<name>MURR_SHIF8</name>
<protein>
    <recommendedName>
        <fullName evidence="1">HTH-type transcriptional regulator MurR</fullName>
    </recommendedName>
    <alternativeName>
        <fullName evidence="1">MurPQ operon repressor</fullName>
    </alternativeName>
</protein>
<organism>
    <name type="scientific">Shigella flexneri serotype 5b (strain 8401)</name>
    <dbReference type="NCBI Taxonomy" id="373384"/>
    <lineage>
        <taxon>Bacteria</taxon>
        <taxon>Pseudomonadati</taxon>
        <taxon>Pseudomonadota</taxon>
        <taxon>Gammaproteobacteria</taxon>
        <taxon>Enterobacterales</taxon>
        <taxon>Enterobacteriaceae</taxon>
        <taxon>Shigella</taxon>
    </lineage>
</organism>
<keyword id="KW-0119">Carbohydrate metabolism</keyword>
<keyword id="KW-0238">DNA-binding</keyword>
<keyword id="KW-0678">Repressor</keyword>
<keyword id="KW-0804">Transcription</keyword>
<keyword id="KW-0805">Transcription regulation</keyword>
<proteinExistence type="inferred from homology"/>
<comment type="function">
    <text evidence="1">Represses the expression of the murPQ operon involved in the uptake and degradation of N-acetylmuramic acid (MurNAc). Binds to two adjacent inverted repeats within the operator region. MurNAc 6-phosphate, the substrate of MurQ, is the specific inducer that weakens binding of MurR to the operator.</text>
</comment>
<comment type="pathway">
    <text>Amino-sugar metabolism; N-acetylmuramate degradation [regulation].</text>
</comment>
<comment type="subunit">
    <text evidence="1">Homotetramer.</text>
</comment>
<accession>Q0T281</accession>
<dbReference type="EMBL" id="CP000266">
    <property type="protein sequence ID" value="ABF04584.1"/>
    <property type="molecule type" value="Genomic_DNA"/>
</dbReference>
<dbReference type="SMR" id="Q0T281"/>
<dbReference type="KEGG" id="sfv:SFV_2480"/>
<dbReference type="HOGENOM" id="CLU_055769_0_2_6"/>
<dbReference type="UniPathway" id="UPA00342"/>
<dbReference type="Proteomes" id="UP000000659">
    <property type="component" value="Chromosome"/>
</dbReference>
<dbReference type="GO" id="GO:0097367">
    <property type="term" value="F:carbohydrate derivative binding"/>
    <property type="evidence" value="ECO:0007669"/>
    <property type="project" value="InterPro"/>
</dbReference>
<dbReference type="GO" id="GO:0003677">
    <property type="term" value="F:DNA binding"/>
    <property type="evidence" value="ECO:0007669"/>
    <property type="project" value="UniProtKB-KW"/>
</dbReference>
<dbReference type="GO" id="GO:0003700">
    <property type="term" value="F:DNA-binding transcription factor activity"/>
    <property type="evidence" value="ECO:0007669"/>
    <property type="project" value="UniProtKB-UniRule"/>
</dbReference>
<dbReference type="GO" id="GO:1901135">
    <property type="term" value="P:carbohydrate derivative metabolic process"/>
    <property type="evidence" value="ECO:0007669"/>
    <property type="project" value="InterPro"/>
</dbReference>
<dbReference type="GO" id="GO:0097173">
    <property type="term" value="P:N-acetylmuramic acid catabolic process"/>
    <property type="evidence" value="ECO:0007669"/>
    <property type="project" value="UniProtKB-UniPathway"/>
</dbReference>
<dbReference type="GO" id="GO:0045892">
    <property type="term" value="P:negative regulation of DNA-templated transcription"/>
    <property type="evidence" value="ECO:0007669"/>
    <property type="project" value="UniProtKB-UniRule"/>
</dbReference>
<dbReference type="GO" id="GO:0043470">
    <property type="term" value="P:regulation of carbohydrate catabolic process"/>
    <property type="evidence" value="ECO:0007669"/>
    <property type="project" value="UniProtKB-UniRule"/>
</dbReference>
<dbReference type="CDD" id="cd05013">
    <property type="entry name" value="SIS_RpiR"/>
    <property type="match status" value="1"/>
</dbReference>
<dbReference type="Gene3D" id="3.40.50.10490">
    <property type="entry name" value="Glucose-6-phosphate isomerase like protein, domain 1"/>
    <property type="match status" value="1"/>
</dbReference>
<dbReference type="Gene3D" id="1.10.10.10">
    <property type="entry name" value="Winged helix-like DNA-binding domain superfamily/Winged helix DNA-binding domain"/>
    <property type="match status" value="1"/>
</dbReference>
<dbReference type="HAMAP" id="MF_02108">
    <property type="entry name" value="HTH_type_MurR"/>
    <property type="match status" value="1"/>
</dbReference>
<dbReference type="InterPro" id="IPR009057">
    <property type="entry name" value="Homeodomain-like_sf"/>
</dbReference>
<dbReference type="InterPro" id="IPR000281">
    <property type="entry name" value="HTH_RpiR"/>
</dbReference>
<dbReference type="InterPro" id="IPR047640">
    <property type="entry name" value="RpiR-like"/>
</dbReference>
<dbReference type="InterPro" id="IPR035472">
    <property type="entry name" value="RpiR-like_SIS"/>
</dbReference>
<dbReference type="InterPro" id="IPR001347">
    <property type="entry name" value="SIS_dom"/>
</dbReference>
<dbReference type="InterPro" id="IPR046348">
    <property type="entry name" value="SIS_dom_sf"/>
</dbReference>
<dbReference type="InterPro" id="IPR022821">
    <property type="entry name" value="Tscrpt_reg_HTH_MurR"/>
</dbReference>
<dbReference type="InterPro" id="IPR036388">
    <property type="entry name" value="WH-like_DNA-bd_sf"/>
</dbReference>
<dbReference type="NCBIfam" id="NF012026">
    <property type="entry name" value="PRK15482.1"/>
    <property type="match status" value="1"/>
</dbReference>
<dbReference type="PANTHER" id="PTHR30514">
    <property type="entry name" value="GLUCOKINASE"/>
    <property type="match status" value="1"/>
</dbReference>
<dbReference type="PANTHER" id="PTHR30514:SF17">
    <property type="entry name" value="HTH-TYPE TRANSCRIPTIONAL REGULATOR MURR"/>
    <property type="match status" value="1"/>
</dbReference>
<dbReference type="Pfam" id="PF01418">
    <property type="entry name" value="HTH_6"/>
    <property type="match status" value="1"/>
</dbReference>
<dbReference type="Pfam" id="PF01380">
    <property type="entry name" value="SIS"/>
    <property type="match status" value="1"/>
</dbReference>
<dbReference type="SUPFAM" id="SSF46689">
    <property type="entry name" value="Homeodomain-like"/>
    <property type="match status" value="1"/>
</dbReference>
<dbReference type="SUPFAM" id="SSF53697">
    <property type="entry name" value="SIS domain"/>
    <property type="match status" value="1"/>
</dbReference>
<dbReference type="PROSITE" id="PS51071">
    <property type="entry name" value="HTH_RPIR"/>
    <property type="match status" value="1"/>
</dbReference>
<dbReference type="PROSITE" id="PS51464">
    <property type="entry name" value="SIS"/>
    <property type="match status" value="1"/>
</dbReference>
<reference key="1">
    <citation type="journal article" date="2006" name="BMC Genomics">
        <title>Complete genome sequence of Shigella flexneri 5b and comparison with Shigella flexneri 2a.</title>
        <authorList>
            <person name="Nie H."/>
            <person name="Yang F."/>
            <person name="Zhang X."/>
            <person name="Yang J."/>
            <person name="Chen L."/>
            <person name="Wang J."/>
            <person name="Xiong Z."/>
            <person name="Peng J."/>
            <person name="Sun L."/>
            <person name="Dong J."/>
            <person name="Xue Y."/>
            <person name="Xu X."/>
            <person name="Chen S."/>
            <person name="Yao Z."/>
            <person name="Shen Y."/>
            <person name="Jin Q."/>
        </authorList>
    </citation>
    <scope>NUCLEOTIDE SEQUENCE [LARGE SCALE GENOMIC DNA]</scope>
    <source>
        <strain>8401</strain>
    </source>
</reference>
<feature type="chain" id="PRO_0000387775" description="HTH-type transcriptional regulator MurR">
    <location>
        <begin position="1"/>
        <end position="266"/>
    </location>
</feature>
<feature type="domain" description="HTH rpiR-type" evidence="1">
    <location>
        <begin position="1"/>
        <end position="77"/>
    </location>
</feature>
<feature type="domain" description="SIS" evidence="1">
    <location>
        <begin position="128"/>
        <end position="266"/>
    </location>
</feature>
<feature type="DNA-binding region" description="H-T-H motif" evidence="1">
    <location>
        <begin position="37"/>
        <end position="56"/>
    </location>
</feature>
<evidence type="ECO:0000255" key="1">
    <source>
        <dbReference type="HAMAP-Rule" id="MF_02108"/>
    </source>
</evidence>
<gene>
    <name evidence="1" type="primary">murR</name>
    <name type="ordered locus">SFV_2480</name>
</gene>
<sequence length="266" mass="29129">MLYLTKIRNAESEFTGNEQKIADFLRARVSELKSVSSRQMAKQLGISQSSIVKFAQKLGAQGFTELRMALIGEYSASREKTNATALHLHSSITSDDSLEVIARKLNREKELALEQTCALFDYARLQKIIEVISKAPFIQITGLGGSALVGRDLSFKLMKIGYRVACEADTHVQATVSQALKKGDVQIAISYSGSKKEIVLCAEAARKQGATVIAITSLADSPLRRLAHFTLDTVSGETEWRSSSMSTRTAQNSVTDLLFVGLVQHQ</sequence>